<name>RSGA_ACTP2</name>
<feature type="chain" id="PRO_1000188021" description="Small ribosomal subunit biogenesis GTPase RsgA">
    <location>
        <begin position="1"/>
        <end position="344"/>
    </location>
</feature>
<feature type="domain" description="CP-type G" evidence="2">
    <location>
        <begin position="100"/>
        <end position="268"/>
    </location>
</feature>
<feature type="binding site" evidence="1">
    <location>
        <begin position="156"/>
        <end position="159"/>
    </location>
    <ligand>
        <name>GTP</name>
        <dbReference type="ChEBI" id="CHEBI:37565"/>
    </ligand>
</feature>
<feature type="binding site" evidence="1">
    <location>
        <begin position="210"/>
        <end position="218"/>
    </location>
    <ligand>
        <name>GTP</name>
        <dbReference type="ChEBI" id="CHEBI:37565"/>
    </ligand>
</feature>
<feature type="binding site" evidence="1">
    <location>
        <position position="292"/>
    </location>
    <ligand>
        <name>Zn(2+)</name>
        <dbReference type="ChEBI" id="CHEBI:29105"/>
    </ligand>
</feature>
<feature type="binding site" evidence="1">
    <location>
        <position position="297"/>
    </location>
    <ligand>
        <name>Zn(2+)</name>
        <dbReference type="ChEBI" id="CHEBI:29105"/>
    </ligand>
</feature>
<feature type="binding site" evidence="1">
    <location>
        <position position="299"/>
    </location>
    <ligand>
        <name>Zn(2+)</name>
        <dbReference type="ChEBI" id="CHEBI:29105"/>
    </ligand>
</feature>
<feature type="binding site" evidence="1">
    <location>
        <position position="305"/>
    </location>
    <ligand>
        <name>Zn(2+)</name>
        <dbReference type="ChEBI" id="CHEBI:29105"/>
    </ligand>
</feature>
<dbReference type="EC" id="3.6.1.-" evidence="1"/>
<dbReference type="EMBL" id="CP000569">
    <property type="protein sequence ID" value="ABN73238.1"/>
    <property type="molecule type" value="Genomic_DNA"/>
</dbReference>
<dbReference type="RefSeq" id="WP_005600146.1">
    <property type="nucleotide sequence ID" value="NC_009053.1"/>
</dbReference>
<dbReference type="SMR" id="A3MYK2"/>
<dbReference type="STRING" id="416269.APL_0130"/>
<dbReference type="EnsemblBacteria" id="ABN73238">
    <property type="protein sequence ID" value="ABN73238"/>
    <property type="gene ID" value="APL_0130"/>
</dbReference>
<dbReference type="KEGG" id="apl:APL_0130"/>
<dbReference type="eggNOG" id="COG1162">
    <property type="taxonomic scope" value="Bacteria"/>
</dbReference>
<dbReference type="HOGENOM" id="CLU_033617_2_0_6"/>
<dbReference type="Proteomes" id="UP000001432">
    <property type="component" value="Chromosome"/>
</dbReference>
<dbReference type="GO" id="GO:0005737">
    <property type="term" value="C:cytoplasm"/>
    <property type="evidence" value="ECO:0007669"/>
    <property type="project" value="UniProtKB-SubCell"/>
</dbReference>
<dbReference type="GO" id="GO:0005525">
    <property type="term" value="F:GTP binding"/>
    <property type="evidence" value="ECO:0007669"/>
    <property type="project" value="UniProtKB-UniRule"/>
</dbReference>
<dbReference type="GO" id="GO:0003924">
    <property type="term" value="F:GTPase activity"/>
    <property type="evidence" value="ECO:0007669"/>
    <property type="project" value="UniProtKB-UniRule"/>
</dbReference>
<dbReference type="GO" id="GO:0046872">
    <property type="term" value="F:metal ion binding"/>
    <property type="evidence" value="ECO:0007669"/>
    <property type="project" value="UniProtKB-KW"/>
</dbReference>
<dbReference type="GO" id="GO:0019843">
    <property type="term" value="F:rRNA binding"/>
    <property type="evidence" value="ECO:0007669"/>
    <property type="project" value="UniProtKB-KW"/>
</dbReference>
<dbReference type="GO" id="GO:0042274">
    <property type="term" value="P:ribosomal small subunit biogenesis"/>
    <property type="evidence" value="ECO:0007669"/>
    <property type="project" value="UniProtKB-UniRule"/>
</dbReference>
<dbReference type="CDD" id="cd01854">
    <property type="entry name" value="YjeQ_EngC"/>
    <property type="match status" value="1"/>
</dbReference>
<dbReference type="Gene3D" id="2.40.50.140">
    <property type="entry name" value="Nucleic acid-binding proteins"/>
    <property type="match status" value="1"/>
</dbReference>
<dbReference type="Gene3D" id="3.40.50.300">
    <property type="entry name" value="P-loop containing nucleotide triphosphate hydrolases"/>
    <property type="match status" value="1"/>
</dbReference>
<dbReference type="Gene3D" id="1.10.40.50">
    <property type="entry name" value="Probable gtpase engc, domain 3"/>
    <property type="match status" value="1"/>
</dbReference>
<dbReference type="HAMAP" id="MF_01820">
    <property type="entry name" value="GTPase_RsgA"/>
    <property type="match status" value="1"/>
</dbReference>
<dbReference type="InterPro" id="IPR030378">
    <property type="entry name" value="G_CP_dom"/>
</dbReference>
<dbReference type="InterPro" id="IPR012340">
    <property type="entry name" value="NA-bd_OB-fold"/>
</dbReference>
<dbReference type="InterPro" id="IPR027417">
    <property type="entry name" value="P-loop_NTPase"/>
</dbReference>
<dbReference type="InterPro" id="IPR004881">
    <property type="entry name" value="Ribosome_biogen_GTPase_RsgA"/>
</dbReference>
<dbReference type="InterPro" id="IPR010914">
    <property type="entry name" value="RsgA_GTPase_dom"/>
</dbReference>
<dbReference type="NCBIfam" id="NF008931">
    <property type="entry name" value="PRK12288.1"/>
    <property type="match status" value="1"/>
</dbReference>
<dbReference type="NCBIfam" id="TIGR00157">
    <property type="entry name" value="ribosome small subunit-dependent GTPase A"/>
    <property type="match status" value="1"/>
</dbReference>
<dbReference type="PANTHER" id="PTHR32120">
    <property type="entry name" value="SMALL RIBOSOMAL SUBUNIT BIOGENESIS GTPASE RSGA"/>
    <property type="match status" value="1"/>
</dbReference>
<dbReference type="PANTHER" id="PTHR32120:SF11">
    <property type="entry name" value="SMALL RIBOSOMAL SUBUNIT BIOGENESIS GTPASE RSGA 1, MITOCHONDRIAL-RELATED"/>
    <property type="match status" value="1"/>
</dbReference>
<dbReference type="Pfam" id="PF03193">
    <property type="entry name" value="RsgA_GTPase"/>
    <property type="match status" value="1"/>
</dbReference>
<dbReference type="SUPFAM" id="SSF52540">
    <property type="entry name" value="P-loop containing nucleoside triphosphate hydrolases"/>
    <property type="match status" value="1"/>
</dbReference>
<dbReference type="PROSITE" id="PS50936">
    <property type="entry name" value="ENGC_GTPASE"/>
    <property type="match status" value="1"/>
</dbReference>
<dbReference type="PROSITE" id="PS51721">
    <property type="entry name" value="G_CP"/>
    <property type="match status" value="1"/>
</dbReference>
<keyword id="KW-0963">Cytoplasm</keyword>
<keyword id="KW-0342">GTP-binding</keyword>
<keyword id="KW-0378">Hydrolase</keyword>
<keyword id="KW-0479">Metal-binding</keyword>
<keyword id="KW-0547">Nucleotide-binding</keyword>
<keyword id="KW-1185">Reference proteome</keyword>
<keyword id="KW-0690">Ribosome biogenesis</keyword>
<keyword id="KW-0694">RNA-binding</keyword>
<keyword id="KW-0699">rRNA-binding</keyword>
<keyword id="KW-0862">Zinc</keyword>
<evidence type="ECO:0000255" key="1">
    <source>
        <dbReference type="HAMAP-Rule" id="MF_01820"/>
    </source>
</evidence>
<evidence type="ECO:0000255" key="2">
    <source>
        <dbReference type="PROSITE-ProRule" id="PRU01058"/>
    </source>
</evidence>
<gene>
    <name evidence="1" type="primary">rsgA</name>
    <name type="ordered locus">APL_0130</name>
</gene>
<protein>
    <recommendedName>
        <fullName evidence="1">Small ribosomal subunit biogenesis GTPase RsgA</fullName>
        <ecNumber evidence="1">3.6.1.-</ecNumber>
    </recommendedName>
</protein>
<reference key="1">
    <citation type="journal article" date="2008" name="J. Bacteriol.">
        <title>The complete genome sequence of Actinobacillus pleuropneumoniae L20 (serotype 5b).</title>
        <authorList>
            <person name="Foote S.J."/>
            <person name="Bosse J.T."/>
            <person name="Bouevitch A.B."/>
            <person name="Langford P.R."/>
            <person name="Young N.M."/>
            <person name="Nash J.H.E."/>
        </authorList>
    </citation>
    <scope>NUCLEOTIDE SEQUENCE [LARGE SCALE GENOMIC DNA]</scope>
    <source>
        <strain>L20</strain>
    </source>
</reference>
<sequence>MSKRRLTQNQQRRIKSNHHKKIAKPELEWQDEMLGEVQQGIVVTRHAKHADVETEQGEIYRCNLRRTLKNVVVGDQVSWRKGNEQLQGISGVIEAIYPRKNELSRPDYYDGIKVMAANIDQIIIVSAVLPTLSLNIIDRYLVICETAKIPALIVLNKIDLLSESERQEVQKQLAIYENIGYETLCLSADTGENMEKLDRYLSRGTSIFVGQSGVGKSSLINQLLPEVNALTGAVSDISGLGQHTTTSSRLYHLPQGGNLIDSPGIREFGLWHLEPEQITLGYREFQSVLGTCKFRDCKHKSDPGCAVREAVEKGEINAIRFENYHRLIESRDETKSQRHFRTEE</sequence>
<organism>
    <name type="scientific">Actinobacillus pleuropneumoniae serotype 5b (strain L20)</name>
    <dbReference type="NCBI Taxonomy" id="416269"/>
    <lineage>
        <taxon>Bacteria</taxon>
        <taxon>Pseudomonadati</taxon>
        <taxon>Pseudomonadota</taxon>
        <taxon>Gammaproteobacteria</taxon>
        <taxon>Pasteurellales</taxon>
        <taxon>Pasteurellaceae</taxon>
        <taxon>Actinobacillus</taxon>
    </lineage>
</organism>
<proteinExistence type="inferred from homology"/>
<accession>A3MYK2</accession>
<comment type="function">
    <text evidence="1">One of several proteins that assist in the late maturation steps of the functional core of the 30S ribosomal subunit. Helps release RbfA from mature subunits. May play a role in the assembly of ribosomal proteins into the subunit. Circularly permuted GTPase that catalyzes slow GTP hydrolysis, GTPase activity is stimulated by the 30S ribosomal subunit.</text>
</comment>
<comment type="cofactor">
    <cofactor evidence="1">
        <name>Zn(2+)</name>
        <dbReference type="ChEBI" id="CHEBI:29105"/>
    </cofactor>
    <text evidence="1">Binds 1 zinc ion per subunit.</text>
</comment>
<comment type="subunit">
    <text evidence="1">Monomer. Associates with 30S ribosomal subunit, binds 16S rRNA.</text>
</comment>
<comment type="subcellular location">
    <subcellularLocation>
        <location evidence="1">Cytoplasm</location>
    </subcellularLocation>
</comment>
<comment type="similarity">
    <text evidence="1">Belongs to the TRAFAC class YlqF/YawG GTPase family. RsgA subfamily.</text>
</comment>